<accession>A8W3I8</accession>
<geneLocation type="plastid"/>
<protein>
    <recommendedName>
        <fullName evidence="1">Photosystem I assembly protein Ycf3</fullName>
    </recommendedName>
</protein>
<evidence type="ECO:0000255" key="1">
    <source>
        <dbReference type="HAMAP-Rule" id="MF_00439"/>
    </source>
</evidence>
<evidence type="ECO:0000305" key="2"/>
<name>YCF3_CUSOB</name>
<keyword id="KW-0472">Membrane</keyword>
<keyword id="KW-0602">Photosynthesis</keyword>
<keyword id="KW-0934">Plastid</keyword>
<keyword id="KW-0677">Repeat</keyword>
<keyword id="KW-0802">TPR repeat</keyword>
<reference key="1">
    <citation type="journal article" date="2007" name="BMC Plant Biol.">
        <title>Complete plastid genome sequences suggest strong selection for retention of photosynthetic genes in the parasitic plant genus Cuscuta.</title>
        <authorList>
            <person name="McNeal J.R."/>
            <person name="Kuehl J.V."/>
            <person name="Boore J.L."/>
            <person name="dePamphilis C.W."/>
        </authorList>
    </citation>
    <scope>NUCLEOTIDE SEQUENCE [LARGE SCALE GENOMIC DNA]</scope>
</reference>
<sequence length="168" mass="19554">MPISQKNQNFIDRTFSIIANILLRIIPTTSGEKEAFAYYINGMSAQSEGNYAEALQNYYQAMHLEMDPYDRSYILYNIGIIHTSNGEHSKALEYYCRAIERNPFLPQAFNNMAVICHYRGEQAIQQGDSEIAEAWFDQAAEYWKQARTLTPDNYIEAQNWLTITWRSK</sequence>
<comment type="function">
    <text evidence="1">Essential for the assembly of the photosystem I (PSI) complex. May act as a chaperone-like factor to guide the assembly of the PSI subunits.</text>
</comment>
<comment type="subcellular location">
    <subcellularLocation>
        <location evidence="2">Plastid membrane</location>
        <topology evidence="1">Peripheral membrane protein</topology>
    </subcellularLocation>
</comment>
<comment type="similarity">
    <text evidence="1">Belongs to the Ycf3 family.</text>
</comment>
<comment type="caution">
    <text evidence="2">Only inflorescences, fruits, starved seedlings and stressed stem tips are green in this organism.</text>
</comment>
<dbReference type="EMBL" id="EU189133">
    <property type="protein sequence ID" value="ABW20563.1"/>
    <property type="molecule type" value="Genomic_DNA"/>
</dbReference>
<dbReference type="RefSeq" id="YP_001531218.1">
    <property type="nucleotide sequence ID" value="NC_009949.1"/>
</dbReference>
<dbReference type="SMR" id="A8W3I8"/>
<dbReference type="GeneID" id="5714757"/>
<dbReference type="GO" id="GO:0042170">
    <property type="term" value="C:plastid membrane"/>
    <property type="evidence" value="ECO:0007669"/>
    <property type="project" value="UniProtKB-SubCell"/>
</dbReference>
<dbReference type="GO" id="GO:0042651">
    <property type="term" value="C:thylakoid membrane"/>
    <property type="evidence" value="ECO:0007669"/>
    <property type="project" value="UniProtKB-UniRule"/>
</dbReference>
<dbReference type="GO" id="GO:0015979">
    <property type="term" value="P:photosynthesis"/>
    <property type="evidence" value="ECO:0007669"/>
    <property type="project" value="UniProtKB-UniRule"/>
</dbReference>
<dbReference type="FunFam" id="1.25.40.10:FF:000004">
    <property type="entry name" value="Photosystem I assembly protein Ycf3"/>
    <property type="match status" value="1"/>
</dbReference>
<dbReference type="Gene3D" id="1.25.40.10">
    <property type="entry name" value="Tetratricopeptide repeat domain"/>
    <property type="match status" value="1"/>
</dbReference>
<dbReference type="HAMAP" id="MF_00439">
    <property type="entry name" value="Ycf3"/>
    <property type="match status" value="1"/>
</dbReference>
<dbReference type="InterPro" id="IPR022818">
    <property type="entry name" value="PSI_Ycf3_assembly"/>
</dbReference>
<dbReference type="InterPro" id="IPR011990">
    <property type="entry name" value="TPR-like_helical_dom_sf"/>
</dbReference>
<dbReference type="InterPro" id="IPR019734">
    <property type="entry name" value="TPR_rpt"/>
</dbReference>
<dbReference type="InterPro" id="IPR051685">
    <property type="entry name" value="Ycf3/AcsC/BcsC/TPR_MFPF"/>
</dbReference>
<dbReference type="NCBIfam" id="NF002725">
    <property type="entry name" value="PRK02603.1"/>
    <property type="match status" value="1"/>
</dbReference>
<dbReference type="PANTHER" id="PTHR44943">
    <property type="entry name" value="CELLULOSE SYNTHASE OPERON PROTEIN C"/>
    <property type="match status" value="1"/>
</dbReference>
<dbReference type="PANTHER" id="PTHR44943:SF8">
    <property type="entry name" value="TPR REPEAT-CONTAINING PROTEIN MJ0263"/>
    <property type="match status" value="1"/>
</dbReference>
<dbReference type="Pfam" id="PF13424">
    <property type="entry name" value="TPR_12"/>
    <property type="match status" value="1"/>
</dbReference>
<dbReference type="SMART" id="SM00028">
    <property type="entry name" value="TPR"/>
    <property type="match status" value="3"/>
</dbReference>
<dbReference type="SUPFAM" id="SSF48452">
    <property type="entry name" value="TPR-like"/>
    <property type="match status" value="1"/>
</dbReference>
<dbReference type="PROSITE" id="PS50005">
    <property type="entry name" value="TPR"/>
    <property type="match status" value="3"/>
</dbReference>
<dbReference type="PROSITE" id="PS50293">
    <property type="entry name" value="TPR_REGION"/>
    <property type="match status" value="1"/>
</dbReference>
<feature type="chain" id="PRO_0000325058" description="Photosystem I assembly protein Ycf3">
    <location>
        <begin position="1"/>
        <end position="168"/>
    </location>
</feature>
<feature type="repeat" description="TPR 1">
    <location>
        <begin position="35"/>
        <end position="68"/>
    </location>
</feature>
<feature type="repeat" description="TPR 2">
    <location>
        <begin position="72"/>
        <end position="105"/>
    </location>
</feature>
<feature type="repeat" description="TPR 3">
    <location>
        <begin position="120"/>
        <end position="153"/>
    </location>
</feature>
<organism>
    <name type="scientific">Cuscuta obtusiflora</name>
    <name type="common">Peruvian dodder</name>
    <dbReference type="NCBI Taxonomy" id="437280"/>
    <lineage>
        <taxon>Eukaryota</taxon>
        <taxon>Viridiplantae</taxon>
        <taxon>Streptophyta</taxon>
        <taxon>Embryophyta</taxon>
        <taxon>Tracheophyta</taxon>
        <taxon>Spermatophyta</taxon>
        <taxon>Magnoliopsida</taxon>
        <taxon>eudicotyledons</taxon>
        <taxon>Gunneridae</taxon>
        <taxon>Pentapetalae</taxon>
        <taxon>asterids</taxon>
        <taxon>lamiids</taxon>
        <taxon>Solanales</taxon>
        <taxon>Convolvulaceae</taxon>
        <taxon>Cuscuteae</taxon>
        <taxon>Cuscuta</taxon>
        <taxon>Cuscuta subgen. Grammica</taxon>
        <taxon>Cuscuta sect. Cleistogrammica</taxon>
    </lineage>
</organism>
<gene>
    <name evidence="1" type="primary">ycf3</name>
</gene>
<proteinExistence type="inferred from homology"/>